<organism>
    <name type="scientific">Lawsonia intracellularis (strain PHE/MN1-00)</name>
    <dbReference type="NCBI Taxonomy" id="363253"/>
    <lineage>
        <taxon>Bacteria</taxon>
        <taxon>Pseudomonadati</taxon>
        <taxon>Thermodesulfobacteriota</taxon>
        <taxon>Desulfovibrionia</taxon>
        <taxon>Desulfovibrionales</taxon>
        <taxon>Desulfovibrionaceae</taxon>
        <taxon>Lawsonia</taxon>
    </lineage>
</organism>
<proteinExistence type="inferred from homology"/>
<feature type="chain" id="PRO_1000007267" description="Large ribosomal subunit protein bL28">
    <location>
        <begin position="1"/>
        <end position="69"/>
    </location>
</feature>
<dbReference type="EMBL" id="AM180252">
    <property type="protein sequence ID" value="CAJ54880.1"/>
    <property type="molecule type" value="Genomic_DNA"/>
</dbReference>
<dbReference type="RefSeq" id="WP_011526909.1">
    <property type="nucleotide sequence ID" value="NC_008011.1"/>
</dbReference>
<dbReference type="SMR" id="Q1MQ47"/>
<dbReference type="STRING" id="363253.LI0826"/>
<dbReference type="KEGG" id="lip:LI0826"/>
<dbReference type="eggNOG" id="COG0227">
    <property type="taxonomic scope" value="Bacteria"/>
</dbReference>
<dbReference type="HOGENOM" id="CLU_064548_7_0_7"/>
<dbReference type="OrthoDB" id="9805609at2"/>
<dbReference type="Proteomes" id="UP000002430">
    <property type="component" value="Chromosome"/>
</dbReference>
<dbReference type="GO" id="GO:1990904">
    <property type="term" value="C:ribonucleoprotein complex"/>
    <property type="evidence" value="ECO:0007669"/>
    <property type="project" value="UniProtKB-KW"/>
</dbReference>
<dbReference type="GO" id="GO:0005840">
    <property type="term" value="C:ribosome"/>
    <property type="evidence" value="ECO:0007669"/>
    <property type="project" value="UniProtKB-KW"/>
</dbReference>
<dbReference type="GO" id="GO:0003735">
    <property type="term" value="F:structural constituent of ribosome"/>
    <property type="evidence" value="ECO:0007669"/>
    <property type="project" value="InterPro"/>
</dbReference>
<dbReference type="GO" id="GO:0006412">
    <property type="term" value="P:translation"/>
    <property type="evidence" value="ECO:0007669"/>
    <property type="project" value="UniProtKB-UniRule"/>
</dbReference>
<dbReference type="Gene3D" id="2.20.150.30">
    <property type="match status" value="1"/>
</dbReference>
<dbReference type="Gene3D" id="2.30.170.40">
    <property type="entry name" value="Ribosomal protein L28/L24"/>
    <property type="match status" value="1"/>
</dbReference>
<dbReference type="HAMAP" id="MF_00373">
    <property type="entry name" value="Ribosomal_bL28"/>
    <property type="match status" value="1"/>
</dbReference>
<dbReference type="InterPro" id="IPR050096">
    <property type="entry name" value="Bacterial_rp_bL28"/>
</dbReference>
<dbReference type="InterPro" id="IPR026569">
    <property type="entry name" value="Ribosomal_bL28"/>
</dbReference>
<dbReference type="InterPro" id="IPR034704">
    <property type="entry name" value="Ribosomal_bL28/bL31-like_sf"/>
</dbReference>
<dbReference type="InterPro" id="IPR001383">
    <property type="entry name" value="Ribosomal_bL28_bact-type"/>
</dbReference>
<dbReference type="InterPro" id="IPR037147">
    <property type="entry name" value="Ribosomal_bL28_sf"/>
</dbReference>
<dbReference type="NCBIfam" id="TIGR00009">
    <property type="entry name" value="L28"/>
    <property type="match status" value="1"/>
</dbReference>
<dbReference type="PANTHER" id="PTHR39080">
    <property type="entry name" value="50S RIBOSOMAL PROTEIN L28"/>
    <property type="match status" value="1"/>
</dbReference>
<dbReference type="PANTHER" id="PTHR39080:SF1">
    <property type="entry name" value="LARGE RIBOSOMAL SUBUNIT PROTEIN BL28A"/>
    <property type="match status" value="1"/>
</dbReference>
<dbReference type="Pfam" id="PF00830">
    <property type="entry name" value="Ribosomal_L28"/>
    <property type="match status" value="1"/>
</dbReference>
<dbReference type="SUPFAM" id="SSF143800">
    <property type="entry name" value="L28p-like"/>
    <property type="match status" value="1"/>
</dbReference>
<comment type="similarity">
    <text evidence="1">Belongs to the bacterial ribosomal protein bL28 family.</text>
</comment>
<reference key="1">
    <citation type="submission" date="2005-11" db="EMBL/GenBank/DDBJ databases">
        <title>The complete genome sequence of Lawsonia intracellularis: the causative agent of proliferative enteropathy.</title>
        <authorList>
            <person name="Kaur K."/>
            <person name="Zhang Q."/>
            <person name="Beckler D."/>
            <person name="Munir S."/>
            <person name="Li L."/>
            <person name="Kinsley K."/>
            <person name="Herron L."/>
            <person name="Peterson A."/>
            <person name="May B."/>
            <person name="Singh S."/>
            <person name="Gebhart C."/>
            <person name="Kapur V."/>
        </authorList>
    </citation>
    <scope>NUCLEOTIDE SEQUENCE [LARGE SCALE GENOMIC DNA]</scope>
    <source>
        <strain>PHE/MN1-00</strain>
    </source>
</reference>
<name>RL28_LAWIP</name>
<protein>
    <recommendedName>
        <fullName evidence="1">Large ribosomal subunit protein bL28</fullName>
    </recommendedName>
    <alternativeName>
        <fullName evidence="2">50S ribosomal protein L28</fullName>
    </alternativeName>
</protein>
<gene>
    <name evidence="1" type="primary">rpmB</name>
    <name type="ordered locus">LI0826</name>
</gene>
<sequence>MAKQCEICGKKPLVGNYVSHSNIKTKRVFNPNLQHMRNQFPDGRIKTITICTRCIRSGHVTKPSIHKGS</sequence>
<evidence type="ECO:0000255" key="1">
    <source>
        <dbReference type="HAMAP-Rule" id="MF_00373"/>
    </source>
</evidence>
<evidence type="ECO:0000305" key="2"/>
<accession>Q1MQ47</accession>
<keyword id="KW-1185">Reference proteome</keyword>
<keyword id="KW-0687">Ribonucleoprotein</keyword>
<keyword id="KW-0689">Ribosomal protein</keyword>